<evidence type="ECO:0000250" key="1"/>
<evidence type="ECO:0000255" key="2"/>
<evidence type="ECO:0000305" key="3"/>
<proteinExistence type="inferred from homology"/>
<name>MNHF2_STAAC</name>
<protein>
    <recommendedName>
        <fullName>Putative antiporter subunit mnhF2</fullName>
    </recommendedName>
    <alternativeName>
        <fullName>Mrp complex subunit F2</fullName>
    </alternativeName>
    <alternativeName>
        <fullName>Putative NADH-ubiquinone oxidoreductase subunit mnhF2</fullName>
    </alternativeName>
</protein>
<dbReference type="EMBL" id="CP000046">
    <property type="protein sequence ID" value="AAW37749.1"/>
    <property type="molecule type" value="Genomic_DNA"/>
</dbReference>
<dbReference type="RefSeq" id="WP_000616642.1">
    <property type="nucleotide sequence ID" value="NZ_JBGOFO010000005.1"/>
</dbReference>
<dbReference type="SMR" id="Q5HI40"/>
<dbReference type="KEGG" id="sac:SACOL0685"/>
<dbReference type="HOGENOM" id="CLU_125825_1_3_9"/>
<dbReference type="Proteomes" id="UP000000530">
    <property type="component" value="Chromosome"/>
</dbReference>
<dbReference type="GO" id="GO:0005886">
    <property type="term" value="C:plasma membrane"/>
    <property type="evidence" value="ECO:0007669"/>
    <property type="project" value="UniProtKB-SubCell"/>
</dbReference>
<dbReference type="GO" id="GO:0015385">
    <property type="term" value="F:sodium:proton antiporter activity"/>
    <property type="evidence" value="ECO:0007669"/>
    <property type="project" value="TreeGrafter"/>
</dbReference>
<dbReference type="InterPro" id="IPR007208">
    <property type="entry name" value="MrpF/PhaF-like"/>
</dbReference>
<dbReference type="NCBIfam" id="NF009300">
    <property type="entry name" value="PRK12657.1"/>
    <property type="match status" value="1"/>
</dbReference>
<dbReference type="PANTHER" id="PTHR34702">
    <property type="entry name" value="NA(+)/H(+) ANTIPORTER SUBUNIT F1"/>
    <property type="match status" value="1"/>
</dbReference>
<dbReference type="PANTHER" id="PTHR34702:SF1">
    <property type="entry name" value="NA(+)_H(+) ANTIPORTER SUBUNIT F"/>
    <property type="match status" value="1"/>
</dbReference>
<dbReference type="Pfam" id="PF04066">
    <property type="entry name" value="MrpF_PhaF"/>
    <property type="match status" value="1"/>
</dbReference>
<dbReference type="PIRSF" id="PIRSF028784">
    <property type="entry name" value="MrpF"/>
    <property type="match status" value="1"/>
</dbReference>
<accession>Q5HI40</accession>
<gene>
    <name type="primary">mnhF2</name>
    <name type="synonym">mrpF2</name>
    <name type="ordered locus">SACOL0685</name>
</gene>
<sequence length="100" mass="10730">MIQTITHIMIISSLIIFGIALIICLFRLIKGPTTADRVVTFDTTSAVVMSIVGVLSVLMGTVSFLDSIMLIAIISFVSSVSISRFIGGGHVFNGNNKRNL</sequence>
<comment type="subunit">
    <text evidence="1">May form a heterooligomeric complex that consists of seven subunits: mnhA2, mnhB2, mnhC2, mnhD2, mnhE2, mnhF2 and mnhG2.</text>
</comment>
<comment type="subcellular location">
    <subcellularLocation>
        <location evidence="3">Cell membrane</location>
        <topology evidence="3">Multi-pass membrane protein</topology>
    </subcellularLocation>
</comment>
<comment type="similarity">
    <text evidence="3">Belongs to the CPA3 antiporters (TC 2.A.63) subunit F family.</text>
</comment>
<keyword id="KW-0050">Antiport</keyword>
<keyword id="KW-1003">Cell membrane</keyword>
<keyword id="KW-0406">Ion transport</keyword>
<keyword id="KW-0472">Membrane</keyword>
<keyword id="KW-0812">Transmembrane</keyword>
<keyword id="KW-1133">Transmembrane helix</keyword>
<keyword id="KW-0813">Transport</keyword>
<feature type="chain" id="PRO_0000372192" description="Putative antiporter subunit mnhF2">
    <location>
        <begin position="1"/>
        <end position="100"/>
    </location>
</feature>
<feature type="transmembrane region" description="Helical" evidence="2">
    <location>
        <begin position="5"/>
        <end position="25"/>
    </location>
</feature>
<feature type="transmembrane region" description="Helical" evidence="2">
    <location>
        <begin position="38"/>
        <end position="60"/>
    </location>
</feature>
<feature type="transmembrane region" description="Helical" evidence="2">
    <location>
        <begin position="70"/>
        <end position="92"/>
    </location>
</feature>
<organism>
    <name type="scientific">Staphylococcus aureus (strain COL)</name>
    <dbReference type="NCBI Taxonomy" id="93062"/>
    <lineage>
        <taxon>Bacteria</taxon>
        <taxon>Bacillati</taxon>
        <taxon>Bacillota</taxon>
        <taxon>Bacilli</taxon>
        <taxon>Bacillales</taxon>
        <taxon>Staphylococcaceae</taxon>
        <taxon>Staphylococcus</taxon>
    </lineage>
</organism>
<reference key="1">
    <citation type="journal article" date="2005" name="J. Bacteriol.">
        <title>Insights on evolution of virulence and resistance from the complete genome analysis of an early methicillin-resistant Staphylococcus aureus strain and a biofilm-producing methicillin-resistant Staphylococcus epidermidis strain.</title>
        <authorList>
            <person name="Gill S.R."/>
            <person name="Fouts D.E."/>
            <person name="Archer G.L."/>
            <person name="Mongodin E.F."/>
            <person name="DeBoy R.T."/>
            <person name="Ravel J."/>
            <person name="Paulsen I.T."/>
            <person name="Kolonay J.F."/>
            <person name="Brinkac L.M."/>
            <person name="Beanan M.J."/>
            <person name="Dodson R.J."/>
            <person name="Daugherty S.C."/>
            <person name="Madupu R."/>
            <person name="Angiuoli S.V."/>
            <person name="Durkin A.S."/>
            <person name="Haft D.H."/>
            <person name="Vamathevan J.J."/>
            <person name="Khouri H."/>
            <person name="Utterback T.R."/>
            <person name="Lee C."/>
            <person name="Dimitrov G."/>
            <person name="Jiang L."/>
            <person name="Qin H."/>
            <person name="Weidman J."/>
            <person name="Tran K."/>
            <person name="Kang K.H."/>
            <person name="Hance I.R."/>
            <person name="Nelson K.E."/>
            <person name="Fraser C.M."/>
        </authorList>
    </citation>
    <scope>NUCLEOTIDE SEQUENCE [LARGE SCALE GENOMIC DNA]</scope>
    <source>
        <strain>COL</strain>
    </source>
</reference>